<organism>
    <name type="scientific">Acinetobacter baumannii (strain AYE)</name>
    <dbReference type="NCBI Taxonomy" id="509173"/>
    <lineage>
        <taxon>Bacteria</taxon>
        <taxon>Pseudomonadati</taxon>
        <taxon>Pseudomonadota</taxon>
        <taxon>Gammaproteobacteria</taxon>
        <taxon>Moraxellales</taxon>
        <taxon>Moraxellaceae</taxon>
        <taxon>Acinetobacter</taxon>
        <taxon>Acinetobacter calcoaceticus/baumannii complex</taxon>
    </lineage>
</organism>
<evidence type="ECO:0000255" key="1">
    <source>
        <dbReference type="HAMAP-Rule" id="MF_00127"/>
    </source>
</evidence>
<sequence>MSSIVAIKGFNDVLPTQTAAWRRLEQHLASLMDAYGYQQIRLPIVEQTGLFKRAIGDATDIVEKEMYTFFDKGNPPESLTLRPEGTAGCVRALVEHNLLRGATPRVWYMGPMFRYEKPQKGRYRQFHQFGVETFGVATPDIDAELIMLTARLWKRMGVDHMVQLELNTLGETDERTEYRNALVAFLNEHKDALDEDSQRRLTTNPLRILDSKIESTQKILENAPKLHDFLKEDSLSHFQQLQDYLTAAGIKFVINQKLVRGLDYYNKTVFEWTTTALGSQGTVCAGGRYDGLVGQLKGKADQSVPAVGFAMGMERLLLLLEQVEQAEIVRDCEAFLVAEPAYQSKALVLAEQLRDQLEAANSNIRIKTGSQGSMKSQMKKADQAGAVYAIILGEREWEAQQLAVKELATAEQSQVALAELVPFLIEKFTK</sequence>
<proteinExistence type="inferred from homology"/>
<dbReference type="EC" id="6.1.1.21" evidence="1"/>
<dbReference type="EMBL" id="CU459141">
    <property type="protein sequence ID" value="CAM88063.1"/>
    <property type="molecule type" value="Genomic_DNA"/>
</dbReference>
<dbReference type="RefSeq" id="WP_000095254.1">
    <property type="nucleotide sequence ID" value="NZ_JBDGFB010000008.1"/>
</dbReference>
<dbReference type="SMR" id="B0V5G6"/>
<dbReference type="EnsemblBacteria" id="CAM88063">
    <property type="protein sequence ID" value="CAM88063"/>
    <property type="gene ID" value="ABAYE3262"/>
</dbReference>
<dbReference type="GeneID" id="92892506"/>
<dbReference type="KEGG" id="aby:ABAYE3262"/>
<dbReference type="HOGENOM" id="CLU_025113_1_0_6"/>
<dbReference type="GO" id="GO:0005737">
    <property type="term" value="C:cytoplasm"/>
    <property type="evidence" value="ECO:0007669"/>
    <property type="project" value="UniProtKB-SubCell"/>
</dbReference>
<dbReference type="GO" id="GO:0005524">
    <property type="term" value="F:ATP binding"/>
    <property type="evidence" value="ECO:0007669"/>
    <property type="project" value="UniProtKB-UniRule"/>
</dbReference>
<dbReference type="GO" id="GO:0004821">
    <property type="term" value="F:histidine-tRNA ligase activity"/>
    <property type="evidence" value="ECO:0007669"/>
    <property type="project" value="UniProtKB-UniRule"/>
</dbReference>
<dbReference type="GO" id="GO:0006427">
    <property type="term" value="P:histidyl-tRNA aminoacylation"/>
    <property type="evidence" value="ECO:0007669"/>
    <property type="project" value="UniProtKB-UniRule"/>
</dbReference>
<dbReference type="CDD" id="cd00773">
    <property type="entry name" value="HisRS-like_core"/>
    <property type="match status" value="1"/>
</dbReference>
<dbReference type="FunFam" id="3.30.930.10:FF:000005">
    <property type="entry name" value="Histidine--tRNA ligase"/>
    <property type="match status" value="1"/>
</dbReference>
<dbReference type="Gene3D" id="3.40.50.800">
    <property type="entry name" value="Anticodon-binding domain"/>
    <property type="match status" value="1"/>
</dbReference>
<dbReference type="Gene3D" id="3.30.930.10">
    <property type="entry name" value="Bira Bifunctional Protein, Domain 2"/>
    <property type="match status" value="1"/>
</dbReference>
<dbReference type="HAMAP" id="MF_00127">
    <property type="entry name" value="His_tRNA_synth"/>
    <property type="match status" value="1"/>
</dbReference>
<dbReference type="InterPro" id="IPR006195">
    <property type="entry name" value="aa-tRNA-synth_II"/>
</dbReference>
<dbReference type="InterPro" id="IPR045864">
    <property type="entry name" value="aa-tRNA-synth_II/BPL/LPL"/>
</dbReference>
<dbReference type="InterPro" id="IPR004154">
    <property type="entry name" value="Anticodon-bd"/>
</dbReference>
<dbReference type="InterPro" id="IPR036621">
    <property type="entry name" value="Anticodon-bd_dom_sf"/>
</dbReference>
<dbReference type="InterPro" id="IPR015807">
    <property type="entry name" value="His-tRNA-ligase"/>
</dbReference>
<dbReference type="InterPro" id="IPR041715">
    <property type="entry name" value="HisRS-like_core"/>
</dbReference>
<dbReference type="InterPro" id="IPR004516">
    <property type="entry name" value="HisRS/HisZ"/>
</dbReference>
<dbReference type="NCBIfam" id="TIGR00442">
    <property type="entry name" value="hisS"/>
    <property type="match status" value="1"/>
</dbReference>
<dbReference type="PANTHER" id="PTHR43707:SF1">
    <property type="entry name" value="HISTIDINE--TRNA LIGASE, MITOCHONDRIAL-RELATED"/>
    <property type="match status" value="1"/>
</dbReference>
<dbReference type="PANTHER" id="PTHR43707">
    <property type="entry name" value="HISTIDYL-TRNA SYNTHETASE"/>
    <property type="match status" value="1"/>
</dbReference>
<dbReference type="Pfam" id="PF03129">
    <property type="entry name" value="HGTP_anticodon"/>
    <property type="match status" value="1"/>
</dbReference>
<dbReference type="Pfam" id="PF13393">
    <property type="entry name" value="tRNA-synt_His"/>
    <property type="match status" value="1"/>
</dbReference>
<dbReference type="PIRSF" id="PIRSF001549">
    <property type="entry name" value="His-tRNA_synth"/>
    <property type="match status" value="1"/>
</dbReference>
<dbReference type="SUPFAM" id="SSF52954">
    <property type="entry name" value="Class II aaRS ABD-related"/>
    <property type="match status" value="1"/>
</dbReference>
<dbReference type="SUPFAM" id="SSF55681">
    <property type="entry name" value="Class II aaRS and biotin synthetases"/>
    <property type="match status" value="1"/>
</dbReference>
<dbReference type="PROSITE" id="PS50862">
    <property type="entry name" value="AA_TRNA_LIGASE_II"/>
    <property type="match status" value="1"/>
</dbReference>
<protein>
    <recommendedName>
        <fullName evidence="1">Histidine--tRNA ligase</fullName>
        <ecNumber evidence="1">6.1.1.21</ecNumber>
    </recommendedName>
    <alternativeName>
        <fullName evidence="1">Histidyl-tRNA synthetase</fullName>
        <shortName evidence="1">HisRS</shortName>
    </alternativeName>
</protein>
<feature type="chain" id="PRO_1000095525" description="Histidine--tRNA ligase">
    <location>
        <begin position="1"/>
        <end position="430"/>
    </location>
</feature>
<comment type="catalytic activity">
    <reaction evidence="1">
        <text>tRNA(His) + L-histidine + ATP = L-histidyl-tRNA(His) + AMP + diphosphate + H(+)</text>
        <dbReference type="Rhea" id="RHEA:17313"/>
        <dbReference type="Rhea" id="RHEA-COMP:9665"/>
        <dbReference type="Rhea" id="RHEA-COMP:9689"/>
        <dbReference type="ChEBI" id="CHEBI:15378"/>
        <dbReference type="ChEBI" id="CHEBI:30616"/>
        <dbReference type="ChEBI" id="CHEBI:33019"/>
        <dbReference type="ChEBI" id="CHEBI:57595"/>
        <dbReference type="ChEBI" id="CHEBI:78442"/>
        <dbReference type="ChEBI" id="CHEBI:78527"/>
        <dbReference type="ChEBI" id="CHEBI:456215"/>
        <dbReference type="EC" id="6.1.1.21"/>
    </reaction>
</comment>
<comment type="subunit">
    <text evidence="1">Homodimer.</text>
</comment>
<comment type="subcellular location">
    <subcellularLocation>
        <location evidence="1">Cytoplasm</location>
    </subcellularLocation>
</comment>
<comment type="similarity">
    <text evidence="1">Belongs to the class-II aminoacyl-tRNA synthetase family.</text>
</comment>
<gene>
    <name evidence="1" type="primary">hisS</name>
    <name type="ordered locus">ABAYE3262</name>
</gene>
<reference key="1">
    <citation type="journal article" date="2008" name="PLoS ONE">
        <title>Comparative analysis of Acinetobacters: three genomes for three lifestyles.</title>
        <authorList>
            <person name="Vallenet D."/>
            <person name="Nordmann P."/>
            <person name="Barbe V."/>
            <person name="Poirel L."/>
            <person name="Mangenot S."/>
            <person name="Bataille E."/>
            <person name="Dossat C."/>
            <person name="Gas S."/>
            <person name="Kreimeyer A."/>
            <person name="Lenoble P."/>
            <person name="Oztas S."/>
            <person name="Poulain J."/>
            <person name="Segurens B."/>
            <person name="Robert C."/>
            <person name="Abergel C."/>
            <person name="Claverie J.-M."/>
            <person name="Raoult D."/>
            <person name="Medigue C."/>
            <person name="Weissenbach J."/>
            <person name="Cruveiller S."/>
        </authorList>
    </citation>
    <scope>NUCLEOTIDE SEQUENCE [LARGE SCALE GENOMIC DNA]</scope>
    <source>
        <strain>AYE</strain>
    </source>
</reference>
<accession>B0V5G6</accession>
<name>SYH_ACIBY</name>
<keyword id="KW-0030">Aminoacyl-tRNA synthetase</keyword>
<keyword id="KW-0067">ATP-binding</keyword>
<keyword id="KW-0963">Cytoplasm</keyword>
<keyword id="KW-0436">Ligase</keyword>
<keyword id="KW-0547">Nucleotide-binding</keyword>
<keyword id="KW-0648">Protein biosynthesis</keyword>